<proteinExistence type="inferred from homology"/>
<comment type="function">
    <text evidence="1">Together with its co-chaperonin GroES, plays an essential role in assisting protein folding. The GroEL-GroES system forms a nano-cage that allows encapsulation of the non-native substrate proteins and provides a physical environment optimized to promote and accelerate protein folding.</text>
</comment>
<comment type="catalytic activity">
    <reaction evidence="1">
        <text>ATP + H2O + a folded polypeptide = ADP + phosphate + an unfolded polypeptide.</text>
        <dbReference type="EC" id="5.6.1.7"/>
    </reaction>
</comment>
<comment type="subunit">
    <text evidence="1">Forms a cylinder of 14 subunits composed of two heptameric rings stacked back-to-back. Interacts with the co-chaperonin GroES.</text>
</comment>
<comment type="subcellular location">
    <subcellularLocation>
        <location evidence="1">Cytoplasm</location>
    </subcellularLocation>
</comment>
<comment type="similarity">
    <text evidence="1">Belongs to the chaperonin (HSP60) family.</text>
</comment>
<organism>
    <name type="scientific">Vibrio cholerae serotype O1 (strain ATCC 39315 / El Tor Inaba N16961)</name>
    <dbReference type="NCBI Taxonomy" id="243277"/>
    <lineage>
        <taxon>Bacteria</taxon>
        <taxon>Pseudomonadati</taxon>
        <taxon>Pseudomonadota</taxon>
        <taxon>Gammaproteobacteria</taxon>
        <taxon>Vibrionales</taxon>
        <taxon>Vibrionaceae</taxon>
        <taxon>Vibrio</taxon>
    </lineage>
</organism>
<evidence type="ECO:0000255" key="1">
    <source>
        <dbReference type="HAMAP-Rule" id="MF_00600"/>
    </source>
</evidence>
<dbReference type="EC" id="5.6.1.7" evidence="1"/>
<dbReference type="EMBL" id="AE003852">
    <property type="protein sequence ID" value="AAF95805.1"/>
    <property type="molecule type" value="Genomic_DNA"/>
</dbReference>
<dbReference type="PIR" id="B82048">
    <property type="entry name" value="B82048"/>
</dbReference>
<dbReference type="RefSeq" id="NP_232292.1">
    <property type="nucleotide sequence ID" value="NC_002505.1"/>
</dbReference>
<dbReference type="SMR" id="Q9KNR7"/>
<dbReference type="STRING" id="243277.VC_2664"/>
<dbReference type="DNASU" id="2615492"/>
<dbReference type="EnsemblBacteria" id="AAF95805">
    <property type="protein sequence ID" value="AAF95805"/>
    <property type="gene ID" value="VC_2664"/>
</dbReference>
<dbReference type="KEGG" id="vch:VC_2664"/>
<dbReference type="PATRIC" id="fig|243277.26.peg.2539"/>
<dbReference type="eggNOG" id="COG0459">
    <property type="taxonomic scope" value="Bacteria"/>
</dbReference>
<dbReference type="HOGENOM" id="CLU_016503_3_0_6"/>
<dbReference type="Proteomes" id="UP000000584">
    <property type="component" value="Chromosome 1"/>
</dbReference>
<dbReference type="GO" id="GO:1990220">
    <property type="term" value="C:GroEL-GroES complex"/>
    <property type="evidence" value="ECO:0000318"/>
    <property type="project" value="GO_Central"/>
</dbReference>
<dbReference type="GO" id="GO:0005524">
    <property type="term" value="F:ATP binding"/>
    <property type="evidence" value="ECO:0000318"/>
    <property type="project" value="GO_Central"/>
</dbReference>
<dbReference type="GO" id="GO:0140662">
    <property type="term" value="F:ATP-dependent protein folding chaperone"/>
    <property type="evidence" value="ECO:0007669"/>
    <property type="project" value="InterPro"/>
</dbReference>
<dbReference type="GO" id="GO:0016853">
    <property type="term" value="F:isomerase activity"/>
    <property type="evidence" value="ECO:0007669"/>
    <property type="project" value="UniProtKB-KW"/>
</dbReference>
<dbReference type="GO" id="GO:0051082">
    <property type="term" value="F:unfolded protein binding"/>
    <property type="evidence" value="ECO:0000318"/>
    <property type="project" value="GO_Central"/>
</dbReference>
<dbReference type="GO" id="GO:0051085">
    <property type="term" value="P:chaperone cofactor-dependent protein refolding"/>
    <property type="evidence" value="ECO:0000318"/>
    <property type="project" value="GO_Central"/>
</dbReference>
<dbReference type="GO" id="GO:0042026">
    <property type="term" value="P:protein refolding"/>
    <property type="evidence" value="ECO:0007669"/>
    <property type="project" value="UniProtKB-UniRule"/>
</dbReference>
<dbReference type="GO" id="GO:0009408">
    <property type="term" value="P:response to heat"/>
    <property type="evidence" value="ECO:0000318"/>
    <property type="project" value="GO_Central"/>
</dbReference>
<dbReference type="CDD" id="cd03344">
    <property type="entry name" value="GroEL"/>
    <property type="match status" value="1"/>
</dbReference>
<dbReference type="FunFam" id="1.10.560.10:FF:000001">
    <property type="entry name" value="60 kDa chaperonin"/>
    <property type="match status" value="1"/>
</dbReference>
<dbReference type="FunFam" id="3.50.7.10:FF:000001">
    <property type="entry name" value="60 kDa chaperonin"/>
    <property type="match status" value="1"/>
</dbReference>
<dbReference type="Gene3D" id="3.50.7.10">
    <property type="entry name" value="GroEL"/>
    <property type="match status" value="1"/>
</dbReference>
<dbReference type="Gene3D" id="1.10.560.10">
    <property type="entry name" value="GroEL-like equatorial domain"/>
    <property type="match status" value="1"/>
</dbReference>
<dbReference type="Gene3D" id="3.30.260.10">
    <property type="entry name" value="TCP-1-like chaperonin intermediate domain"/>
    <property type="match status" value="1"/>
</dbReference>
<dbReference type="HAMAP" id="MF_00600">
    <property type="entry name" value="CH60"/>
    <property type="match status" value="1"/>
</dbReference>
<dbReference type="InterPro" id="IPR018370">
    <property type="entry name" value="Chaperonin_Cpn60_CS"/>
</dbReference>
<dbReference type="InterPro" id="IPR001844">
    <property type="entry name" value="Cpn60/GroEL"/>
</dbReference>
<dbReference type="InterPro" id="IPR002423">
    <property type="entry name" value="Cpn60/GroEL/TCP-1"/>
</dbReference>
<dbReference type="InterPro" id="IPR027409">
    <property type="entry name" value="GroEL-like_apical_dom_sf"/>
</dbReference>
<dbReference type="InterPro" id="IPR027413">
    <property type="entry name" value="GROEL-like_equatorial_sf"/>
</dbReference>
<dbReference type="InterPro" id="IPR027410">
    <property type="entry name" value="TCP-1-like_intermed_sf"/>
</dbReference>
<dbReference type="NCBIfam" id="TIGR02348">
    <property type="entry name" value="GroEL"/>
    <property type="match status" value="1"/>
</dbReference>
<dbReference type="NCBIfam" id="NF000592">
    <property type="entry name" value="PRK00013.1"/>
    <property type="match status" value="1"/>
</dbReference>
<dbReference type="NCBIfam" id="NF009487">
    <property type="entry name" value="PRK12849.1"/>
    <property type="match status" value="1"/>
</dbReference>
<dbReference type="NCBIfam" id="NF009488">
    <property type="entry name" value="PRK12850.1"/>
    <property type="match status" value="1"/>
</dbReference>
<dbReference type="NCBIfam" id="NF009489">
    <property type="entry name" value="PRK12851.1"/>
    <property type="match status" value="1"/>
</dbReference>
<dbReference type="PANTHER" id="PTHR45633">
    <property type="entry name" value="60 KDA HEAT SHOCK PROTEIN, MITOCHONDRIAL"/>
    <property type="match status" value="1"/>
</dbReference>
<dbReference type="Pfam" id="PF00118">
    <property type="entry name" value="Cpn60_TCP1"/>
    <property type="match status" value="1"/>
</dbReference>
<dbReference type="PRINTS" id="PR00298">
    <property type="entry name" value="CHAPERONIN60"/>
</dbReference>
<dbReference type="SUPFAM" id="SSF52029">
    <property type="entry name" value="GroEL apical domain-like"/>
    <property type="match status" value="1"/>
</dbReference>
<dbReference type="SUPFAM" id="SSF48592">
    <property type="entry name" value="GroEL equatorial domain-like"/>
    <property type="match status" value="1"/>
</dbReference>
<dbReference type="SUPFAM" id="SSF54849">
    <property type="entry name" value="GroEL-intermediate domain like"/>
    <property type="match status" value="1"/>
</dbReference>
<dbReference type="PROSITE" id="PS00296">
    <property type="entry name" value="CHAPERONINS_CPN60"/>
    <property type="match status" value="1"/>
</dbReference>
<gene>
    <name evidence="1" type="primary">groEL1</name>
    <name evidence="1" type="synonym">groL1</name>
    <name type="ordered locus">VC_2664</name>
</gene>
<accession>Q9KNR7</accession>
<feature type="chain" id="PRO_0000063593" description="Chaperonin GroEL 1">
    <location>
        <begin position="1"/>
        <end position="544"/>
    </location>
</feature>
<feature type="binding site" evidence="1">
    <location>
        <begin position="30"/>
        <end position="33"/>
    </location>
    <ligand>
        <name>ATP</name>
        <dbReference type="ChEBI" id="CHEBI:30616"/>
    </ligand>
</feature>
<feature type="binding site" evidence="1">
    <location>
        <position position="51"/>
    </location>
    <ligand>
        <name>ATP</name>
        <dbReference type="ChEBI" id="CHEBI:30616"/>
    </ligand>
</feature>
<feature type="binding site" evidence="1">
    <location>
        <begin position="87"/>
        <end position="91"/>
    </location>
    <ligand>
        <name>ATP</name>
        <dbReference type="ChEBI" id="CHEBI:30616"/>
    </ligand>
</feature>
<feature type="binding site" evidence="1">
    <location>
        <position position="415"/>
    </location>
    <ligand>
        <name>ATP</name>
        <dbReference type="ChEBI" id="CHEBI:30616"/>
    </ligand>
</feature>
<feature type="binding site" evidence="1">
    <location>
        <begin position="479"/>
        <end position="481"/>
    </location>
    <ligand>
        <name>ATP</name>
        <dbReference type="ChEBI" id="CHEBI:30616"/>
    </ligand>
</feature>
<feature type="binding site" evidence="1">
    <location>
        <position position="495"/>
    </location>
    <ligand>
        <name>ATP</name>
        <dbReference type="ChEBI" id="CHEBI:30616"/>
    </ligand>
</feature>
<keyword id="KW-0067">ATP-binding</keyword>
<keyword id="KW-0143">Chaperone</keyword>
<keyword id="KW-0963">Cytoplasm</keyword>
<keyword id="KW-0413">Isomerase</keyword>
<keyword id="KW-0547">Nucleotide-binding</keyword>
<keyword id="KW-1185">Reference proteome</keyword>
<protein>
    <recommendedName>
        <fullName evidence="1">Chaperonin GroEL 1</fullName>
        <ecNumber evidence="1">5.6.1.7</ecNumber>
    </recommendedName>
    <alternativeName>
        <fullName evidence="1">60 kDa chaperonin 1</fullName>
    </alternativeName>
    <alternativeName>
        <fullName evidence="1">Chaperonin-60 1</fullName>
        <shortName evidence="1">Cpn60 1</shortName>
    </alternativeName>
</protein>
<sequence>MAAKDVRFGNDARVKMLEGVNILADAVKVTLGPKGRNVVLDKSFGAPTITKDGVSVAREIELEDKFQNMGAQMVKEVASQANDAAGDGTTTATVLAQAIVNEGLKAVAAGMNPMDLKRGIDKAVIAAVEELKALSVPCADTKAIAQVGTISANSDSSVGNIIAEAMEKVGRDGVITVEEGQALQDELDVVEGMQFDRGYLSPYFINNQESGSVELDNPFILLVDKKISNIRELLPVLEGVAKASRPLLIVAEDVEGEALATLVVNNMRGIVKVAAVKAPGFGDRRKAMLQDIAILTGGVVISEEIGLELEKATLEDLGQAKRVSITKENSTIIDGAGDQAAIQGRVAQIRQQIEEATSDYDKEKLQERVAKLAGGVAVIKVGAATEVEMKEKKDRVEDALHATRAAVEEGVVAGGGVALIRAASKLSSLVGDNEEQNVGIRVALRAMEAPLRQIVKNAGDEESVVANNVRAGEGNYGYNAATGVYGDMIEMGILDPTKVTRSALQFAASVAGLMITTEAMITELPKKDAPAMPDMGMGGMGGMM</sequence>
<reference key="1">
    <citation type="journal article" date="2000" name="Nature">
        <title>DNA sequence of both chromosomes of the cholera pathogen Vibrio cholerae.</title>
        <authorList>
            <person name="Heidelberg J.F."/>
            <person name="Eisen J.A."/>
            <person name="Nelson W.C."/>
            <person name="Clayton R.A."/>
            <person name="Gwinn M.L."/>
            <person name="Dodson R.J."/>
            <person name="Haft D.H."/>
            <person name="Hickey E.K."/>
            <person name="Peterson J.D."/>
            <person name="Umayam L.A."/>
            <person name="Gill S.R."/>
            <person name="Nelson K.E."/>
            <person name="Read T.D."/>
            <person name="Tettelin H."/>
            <person name="Richardson D.L."/>
            <person name="Ermolaeva M.D."/>
            <person name="Vamathevan J.J."/>
            <person name="Bass S."/>
            <person name="Qin H."/>
            <person name="Dragoi I."/>
            <person name="Sellers P."/>
            <person name="McDonald L.A."/>
            <person name="Utterback T.R."/>
            <person name="Fleischmann R.D."/>
            <person name="Nierman W.C."/>
            <person name="White O."/>
            <person name="Salzberg S.L."/>
            <person name="Smith H.O."/>
            <person name="Colwell R.R."/>
            <person name="Mekalanos J.J."/>
            <person name="Venter J.C."/>
            <person name="Fraser C.M."/>
        </authorList>
    </citation>
    <scope>NUCLEOTIDE SEQUENCE [LARGE SCALE GENOMIC DNA]</scope>
    <source>
        <strain>ATCC 39315 / El Tor Inaba N16961</strain>
    </source>
</reference>
<name>CH601_VIBCH</name>